<evidence type="ECO:0000250" key="1"/>
<evidence type="ECO:0000250" key="2">
    <source>
        <dbReference type="UniProtKB" id="P24383"/>
    </source>
</evidence>
<evidence type="ECO:0000250" key="3">
    <source>
        <dbReference type="UniProtKB" id="P27467"/>
    </source>
</evidence>
<evidence type="ECO:0000250" key="4">
    <source>
        <dbReference type="UniProtKB" id="P28026"/>
    </source>
</evidence>
<evidence type="ECO:0000250" key="5">
    <source>
        <dbReference type="UniProtKB" id="P56704"/>
    </source>
</evidence>
<evidence type="ECO:0000255" key="6"/>
<evidence type="ECO:0000269" key="7">
    <source>
    </source>
</evidence>
<evidence type="ECO:0000269" key="8">
    <source>
    </source>
</evidence>
<evidence type="ECO:0000269" key="9">
    <source>
    </source>
</evidence>
<evidence type="ECO:0000269" key="10">
    <source>
    </source>
</evidence>
<evidence type="ECO:0000269" key="11">
    <source>
    </source>
</evidence>
<evidence type="ECO:0000269" key="12">
    <source>
    </source>
</evidence>
<evidence type="ECO:0000269" key="13">
    <source>
    </source>
</evidence>
<evidence type="ECO:0000269" key="14">
    <source>
    </source>
</evidence>
<evidence type="ECO:0000269" key="15">
    <source>
    </source>
</evidence>
<evidence type="ECO:0000269" key="16">
    <source>
    </source>
</evidence>
<evidence type="ECO:0000269" key="17">
    <source>
    </source>
</evidence>
<evidence type="ECO:0000269" key="18">
    <source>
    </source>
</evidence>
<evidence type="ECO:0000269" key="19">
    <source>
    </source>
</evidence>
<evidence type="ECO:0000269" key="20">
    <source>
    </source>
</evidence>
<evidence type="ECO:0000269" key="21">
    <source>
    </source>
</evidence>
<evidence type="ECO:0000269" key="22">
    <source>
    </source>
</evidence>
<evidence type="ECO:0000269" key="23">
    <source>
    </source>
</evidence>
<evidence type="ECO:0000269" key="24">
    <source>
    </source>
</evidence>
<evidence type="ECO:0000269" key="25">
    <source>
    </source>
</evidence>
<evidence type="ECO:0000269" key="26">
    <source>
    </source>
</evidence>
<evidence type="ECO:0000269" key="27">
    <source>
    </source>
</evidence>
<evidence type="ECO:0000305" key="28"/>
<evidence type="ECO:0000312" key="29">
    <source>
        <dbReference type="EMBL" id="AAA64846.1"/>
    </source>
</evidence>
<evidence type="ECO:0000312" key="30">
    <source>
        <dbReference type="EMBL" id="AAA64847.1"/>
    </source>
</evidence>
<evidence type="ECO:0000312" key="31">
    <source>
        <dbReference type="PIR" id="A57234"/>
    </source>
</evidence>
<evidence type="ECO:0000312" key="32">
    <source>
        <dbReference type="WormBase" id="E01A2.3"/>
    </source>
</evidence>
<dbReference type="EMBL" id="U22179">
    <property type="protein sequence ID" value="AAA64846.1"/>
    <property type="molecule type" value="mRNA"/>
</dbReference>
<dbReference type="EMBL" id="U22184">
    <property type="protein sequence ID" value="AAA64847.1"/>
    <property type="molecule type" value="Genomic_DNA"/>
</dbReference>
<dbReference type="EMBL" id="BX284601">
    <property type="protein sequence ID" value="CCD68574.1"/>
    <property type="molecule type" value="Genomic_DNA"/>
</dbReference>
<dbReference type="PIR" id="A57234">
    <property type="entry name" value="A57234"/>
</dbReference>
<dbReference type="RefSeq" id="NP_001021081.1">
    <property type="nucleotide sequence ID" value="NM_001025910.5"/>
</dbReference>
<dbReference type="SMR" id="Q27886"/>
<dbReference type="BioGRID" id="37465">
    <property type="interactions" value="2"/>
</dbReference>
<dbReference type="FunCoup" id="Q27886">
    <property type="interactions" value="164"/>
</dbReference>
<dbReference type="STRING" id="6239.E01A2.3.1"/>
<dbReference type="GlyCosmos" id="Q27886">
    <property type="glycosylation" value="1 site, No reported glycans"/>
</dbReference>
<dbReference type="PaxDb" id="6239-E01A2.3a"/>
<dbReference type="EnsemblMetazoa" id="E01A2.3.1">
    <property type="protein sequence ID" value="E01A2.3.1"/>
    <property type="gene ID" value="WBGene00003029"/>
</dbReference>
<dbReference type="GeneID" id="171994"/>
<dbReference type="KEGG" id="cel:CELE_E01A2.3"/>
<dbReference type="UCSC" id="E01A2.3b">
    <property type="organism name" value="c. elegans"/>
</dbReference>
<dbReference type="AGR" id="WB:WBGene00003029"/>
<dbReference type="CTD" id="171994"/>
<dbReference type="WormBase" id="E01A2.3">
    <property type="protein sequence ID" value="CE24870"/>
    <property type="gene ID" value="WBGene00003029"/>
    <property type="gene designation" value="lin-44"/>
</dbReference>
<dbReference type="eggNOG" id="KOG3913">
    <property type="taxonomic scope" value="Eukaryota"/>
</dbReference>
<dbReference type="GeneTree" id="ENSGT00940000167538"/>
<dbReference type="HOGENOM" id="CLU_033039_1_0_1"/>
<dbReference type="InParanoid" id="Q27886"/>
<dbReference type="OMA" id="ESAYLWA"/>
<dbReference type="OrthoDB" id="5945655at2759"/>
<dbReference type="PhylomeDB" id="Q27886"/>
<dbReference type="Reactome" id="R-CEL-3238698">
    <property type="pathway name" value="WNT ligand biogenesis and trafficking"/>
</dbReference>
<dbReference type="Reactome" id="R-CEL-4086398">
    <property type="pathway name" value="Ca2+ pathway"/>
</dbReference>
<dbReference type="Reactome" id="R-CEL-4086400">
    <property type="pathway name" value="PCP/CE pathway"/>
</dbReference>
<dbReference type="PRO" id="PR:Q27886"/>
<dbReference type="Proteomes" id="UP000001940">
    <property type="component" value="Chromosome I"/>
</dbReference>
<dbReference type="Bgee" id="WBGene00003029">
    <property type="expression patterns" value="Expressed in tail and 25 other cell types or tissues"/>
</dbReference>
<dbReference type="GO" id="GO:0005615">
    <property type="term" value="C:extracellular space"/>
    <property type="evidence" value="ECO:0000318"/>
    <property type="project" value="GO_Central"/>
</dbReference>
<dbReference type="GO" id="GO:0005125">
    <property type="term" value="F:cytokine activity"/>
    <property type="evidence" value="ECO:0000318"/>
    <property type="project" value="GO_Central"/>
</dbReference>
<dbReference type="GO" id="GO:0005109">
    <property type="term" value="F:frizzled binding"/>
    <property type="evidence" value="ECO:0000250"/>
    <property type="project" value="WormBase"/>
</dbReference>
<dbReference type="GO" id="GO:0048018">
    <property type="term" value="F:receptor ligand activity"/>
    <property type="evidence" value="ECO:0000250"/>
    <property type="project" value="WormBase"/>
</dbReference>
<dbReference type="GO" id="GO:0008356">
    <property type="term" value="P:asymmetric cell division"/>
    <property type="evidence" value="ECO:0000316"/>
    <property type="project" value="UniProtKB"/>
</dbReference>
<dbReference type="GO" id="GO:0060070">
    <property type="term" value="P:canonical Wnt signaling pathway"/>
    <property type="evidence" value="ECO:0000318"/>
    <property type="project" value="GO_Central"/>
</dbReference>
<dbReference type="GO" id="GO:0045165">
    <property type="term" value="P:cell fate commitment"/>
    <property type="evidence" value="ECO:0000318"/>
    <property type="project" value="GO_Central"/>
</dbReference>
<dbReference type="GO" id="GO:0060573">
    <property type="term" value="P:cell fate specification involved in pattern specification"/>
    <property type="evidence" value="ECO:0000315"/>
    <property type="project" value="WormBase"/>
</dbReference>
<dbReference type="GO" id="GO:0007163">
    <property type="term" value="P:establishment or maintenance of cell polarity"/>
    <property type="evidence" value="ECO:0000315"/>
    <property type="project" value="WormBase"/>
</dbReference>
<dbReference type="GO" id="GO:1904936">
    <property type="term" value="P:interneuron migration"/>
    <property type="evidence" value="ECO:0000316"/>
    <property type="project" value="UniProtKB"/>
</dbReference>
<dbReference type="GO" id="GO:0097475">
    <property type="term" value="P:motor neuron migration"/>
    <property type="evidence" value="ECO:0000316"/>
    <property type="project" value="UniProtKB"/>
</dbReference>
<dbReference type="GO" id="GO:0045138">
    <property type="term" value="P:nematode male tail tip morphogenesis"/>
    <property type="evidence" value="ECO:0000315"/>
    <property type="project" value="WormBase"/>
</dbReference>
<dbReference type="GO" id="GO:0097402">
    <property type="term" value="P:neuroblast migration"/>
    <property type="evidence" value="ECO:0000316"/>
    <property type="project" value="UniProtKB"/>
</dbReference>
<dbReference type="GO" id="GO:0030182">
    <property type="term" value="P:neuron differentiation"/>
    <property type="evidence" value="ECO:0000318"/>
    <property type="project" value="GO_Central"/>
</dbReference>
<dbReference type="GO" id="GO:0001764">
    <property type="term" value="P:neuron migration"/>
    <property type="evidence" value="ECO:0000316"/>
    <property type="project" value="UniProtKB"/>
</dbReference>
<dbReference type="GO" id="GO:0045724">
    <property type="term" value="P:positive regulation of cilium assembly"/>
    <property type="evidence" value="ECO:0000315"/>
    <property type="project" value="UniProtKB"/>
</dbReference>
<dbReference type="GO" id="GO:0050775">
    <property type="term" value="P:positive regulation of dendrite morphogenesis"/>
    <property type="evidence" value="ECO:0000315"/>
    <property type="project" value="UniProtKB"/>
</dbReference>
<dbReference type="GO" id="GO:1905485">
    <property type="term" value="P:positive regulation of motor neuron migration"/>
    <property type="evidence" value="ECO:0000316"/>
    <property type="project" value="UniProtKB"/>
</dbReference>
<dbReference type="GO" id="GO:0010623">
    <property type="term" value="P:programmed cell death involved in cell development"/>
    <property type="evidence" value="ECO:0000315"/>
    <property type="project" value="UniProtKB"/>
</dbReference>
<dbReference type="GO" id="GO:0046662">
    <property type="term" value="P:regulation of egg-laying behavior"/>
    <property type="evidence" value="ECO:0000315"/>
    <property type="project" value="WormBase"/>
</dbReference>
<dbReference type="GO" id="GO:0040028">
    <property type="term" value="P:regulation of vulval development"/>
    <property type="evidence" value="ECO:0000316"/>
    <property type="project" value="WormBase"/>
</dbReference>
<dbReference type="GO" id="GO:0040025">
    <property type="term" value="P:vulval development"/>
    <property type="evidence" value="ECO:0000315"/>
    <property type="project" value="WormBase"/>
</dbReference>
<dbReference type="GO" id="GO:0016055">
    <property type="term" value="P:Wnt signaling pathway"/>
    <property type="evidence" value="ECO:0000316"/>
    <property type="project" value="WormBase"/>
</dbReference>
<dbReference type="CDD" id="cd13113">
    <property type="entry name" value="Wnt"/>
    <property type="match status" value="1"/>
</dbReference>
<dbReference type="FunFam" id="3.30.2460.20:FF:000005">
    <property type="entry name" value="Protein Wnt"/>
    <property type="match status" value="1"/>
</dbReference>
<dbReference type="Gene3D" id="3.30.2460.20">
    <property type="match status" value="1"/>
</dbReference>
<dbReference type="InterPro" id="IPR005817">
    <property type="entry name" value="Wnt"/>
</dbReference>
<dbReference type="InterPro" id="IPR043158">
    <property type="entry name" value="Wnt_C"/>
</dbReference>
<dbReference type="InterPro" id="IPR018161">
    <property type="entry name" value="Wnt_CS"/>
</dbReference>
<dbReference type="PANTHER" id="PTHR12027:SF116">
    <property type="entry name" value="ABNORMAL CELL LINEAGE PROTEIN 44"/>
    <property type="match status" value="1"/>
</dbReference>
<dbReference type="PANTHER" id="PTHR12027">
    <property type="entry name" value="WNT RELATED"/>
    <property type="match status" value="1"/>
</dbReference>
<dbReference type="Pfam" id="PF00110">
    <property type="entry name" value="wnt"/>
    <property type="match status" value="1"/>
</dbReference>
<dbReference type="PRINTS" id="PR01349">
    <property type="entry name" value="WNTPROTEIN"/>
</dbReference>
<dbReference type="SMART" id="SM00097">
    <property type="entry name" value="WNT1"/>
    <property type="match status" value="1"/>
</dbReference>
<dbReference type="PROSITE" id="PS00246">
    <property type="entry name" value="WNT1"/>
    <property type="match status" value="1"/>
</dbReference>
<organism>
    <name type="scientific">Caenorhabditis elegans</name>
    <dbReference type="NCBI Taxonomy" id="6239"/>
    <lineage>
        <taxon>Eukaryota</taxon>
        <taxon>Metazoa</taxon>
        <taxon>Ecdysozoa</taxon>
        <taxon>Nematoda</taxon>
        <taxon>Chromadorea</taxon>
        <taxon>Rhabditida</taxon>
        <taxon>Rhabditina</taxon>
        <taxon>Rhabditomorpha</taxon>
        <taxon>Rhabditoidea</taxon>
        <taxon>Rhabditidae</taxon>
        <taxon>Peloderinae</taxon>
        <taxon>Caenorhabditis</taxon>
    </lineage>
</organism>
<keyword id="KW-0217">Developmental protein</keyword>
<keyword id="KW-1015">Disulfide bond</keyword>
<keyword id="KW-0272">Extracellular matrix</keyword>
<keyword id="KW-0325">Glycoprotein</keyword>
<keyword id="KW-0449">Lipoprotein</keyword>
<keyword id="KW-1185">Reference proteome</keyword>
<keyword id="KW-0964">Secreted</keyword>
<keyword id="KW-0732">Signal</keyword>
<keyword id="KW-0879">Wnt signaling pathway</keyword>
<gene>
    <name evidence="32" type="primary">lin-44</name>
    <name evidence="32" type="ORF">E01A2.3</name>
</gene>
<proteinExistence type="evidence at protein level"/>
<accession>Q27886</accession>
<accession>Q6F3D0</accession>
<name>LIN44_CAEEL</name>
<feature type="signal peptide" evidence="6">
    <location>
        <begin position="1"/>
        <end position="25"/>
    </location>
</feature>
<feature type="chain" id="PRO_0000400090" description="Abnormal cell lineage protein 44" evidence="6">
    <location>
        <begin position="26"/>
        <end position="348"/>
    </location>
</feature>
<feature type="lipid moiety-binding region" description="O-palmitoleoyl serine; by mom-1" evidence="5">
    <location>
        <position position="219"/>
    </location>
</feature>
<feature type="glycosylation site" description="N-linked (GlcNAc...) asparagine" evidence="6">
    <location>
        <position position="286"/>
    </location>
</feature>
<feature type="disulfide bond" evidence="4">
    <location>
        <begin position="91"/>
        <end position="102"/>
    </location>
</feature>
<feature type="disulfide bond" evidence="4">
    <location>
        <begin position="141"/>
        <end position="149"/>
    </location>
</feature>
<feature type="disulfide bond" evidence="4">
    <location>
        <begin position="151"/>
        <end position="165"/>
    </location>
</feature>
<feature type="disulfide bond" evidence="4">
    <location>
        <begin position="213"/>
        <end position="227"/>
    </location>
</feature>
<feature type="disulfide bond" evidence="4">
    <location>
        <begin position="215"/>
        <end position="222"/>
    </location>
</feature>
<feature type="disulfide bond" evidence="4">
    <location>
        <begin position="272"/>
        <end position="299"/>
    </location>
</feature>
<feature type="disulfide bond" evidence="4">
    <location>
        <begin position="282"/>
        <end position="294"/>
    </location>
</feature>
<feature type="disulfide bond" evidence="4">
    <location>
        <begin position="298"/>
        <end position="338"/>
    </location>
</feature>
<feature type="disulfide bond" evidence="4">
    <location>
        <begin position="314"/>
        <end position="329"/>
    </location>
</feature>
<feature type="disulfide bond" evidence="4">
    <location>
        <begin position="316"/>
        <end position="326"/>
    </location>
</feature>
<feature type="disulfide bond" evidence="4">
    <location>
        <begin position="321"/>
        <end position="322"/>
    </location>
</feature>
<feature type="mutagenesis site" description="In n1792; mild defects in neurite positioning along the anterior posterior axis with ventral D-type GABAergic neurons displaying posterior neurites, instead of anterior neurites, which results in ventrodorsal commissures positioned on the posterior side of their cell body. Defective localization of grdn-1 to the distal dendrites of PQR sensory neurons. Instead grdn-1 either localizes to ectopic cellular compartments such as the soma and dendritic base, in posteriorly projecting or misrouted dendrites, or is undetectable." evidence="23">
    <location>
        <begin position="100"/>
        <end position="348"/>
    </location>
</feature>
<reference evidence="28 29" key="1">
    <citation type="journal article" date="1994" name="Development">
        <title>The Caenorhabditis elegans gene lin-44 controls the polarity of asymmetric cell divisions.</title>
        <authorList>
            <person name="Herman M.A."/>
            <person name="Horvitz H.R."/>
        </authorList>
    </citation>
    <scope>NUCLEOTIDE SEQUENCE [MRNA]</scope>
    <scope>FUNCTION</scope>
    <scope>TISSUE SPECIFICITY</scope>
    <scope>DEVELOPMENTAL STAGE</scope>
    <scope>DISRUPTION PHENOTYPE</scope>
    <source>
        <strain evidence="29">Bristol N2</strain>
    </source>
</reference>
<reference evidence="30 31" key="2">
    <citation type="journal article" date="1995" name="Cell">
        <title>The C. elegans gene lin-44, which controls the polarity of certain asymmetric cell divisions, encodes a Wnt protein and acts cell nonautonomously.</title>
        <authorList>
            <person name="Herman M.A."/>
            <person name="Vassilieva L.L."/>
            <person name="Horvitz H.R."/>
            <person name="Shaw J.E."/>
            <person name="Herman R.K."/>
        </authorList>
    </citation>
    <scope>NUCLEOTIDE SEQUENCE [GENOMIC DNA]</scope>
    <scope>FUNCTION</scope>
    <scope>TISSUE SPECIFICITY</scope>
    <scope>DEVELOPMENTAL STAGE</scope>
    <source>
        <strain evidence="30 31">Bristol N2</strain>
    </source>
</reference>
<reference evidence="28" key="3">
    <citation type="journal article" date="1998" name="Science">
        <title>Genome sequence of the nematode C. elegans: a platform for investigating biology.</title>
        <authorList>
            <consortium name="The C. elegans sequencing consortium"/>
        </authorList>
    </citation>
    <scope>NUCLEOTIDE SEQUENCE [LARGE SCALE GENOMIC DNA]</scope>
    <source>
        <strain>Bristol N2</strain>
    </source>
</reference>
<reference evidence="28" key="4">
    <citation type="journal article" date="1996" name="Genes Dev.">
        <title>Lineage-specific regulators couple cell lineage asymmetry to the transcription of the Caenorhabditis elegans POU gene unc-86 during neurogenesis.</title>
        <authorList>
            <person name="Baumeister R."/>
            <person name="Liu Y."/>
            <person name="Ruvkun G."/>
        </authorList>
    </citation>
    <scope>FUNCTION</scope>
</reference>
<reference evidence="28" key="5">
    <citation type="journal article" date="2001" name="Development">
        <title>C. elegans POP-1/TCF functions in a canonical Wnt pathway that controls cell migration and in a noncanonical Wnt pathway that controls cell polarity.</title>
        <authorList>
            <person name="Herman M."/>
        </authorList>
    </citation>
    <scope>FUNCTION</scope>
</reference>
<reference evidence="28" key="6">
    <citation type="journal article" date="2004" name="Cell">
        <title>C. elegans LIN-18 is a Ryk ortholog and functions in parallel to LIN-17/Frizzled in Wnt signaling.</title>
        <authorList>
            <person name="Inoue T."/>
            <person name="Oz H.S."/>
            <person name="Wiland D."/>
            <person name="Gharib S."/>
            <person name="Deshpande R."/>
            <person name="Hill R.J."/>
            <person name="Katz W.S."/>
            <person name="Sternberg P.W."/>
        </authorList>
    </citation>
    <scope>FUNCTION</scope>
    <scope>DISRUPTION PHENOTYPE</scope>
</reference>
<reference evidence="28" key="7">
    <citation type="journal article" date="2005" name="Dev. Biol.">
        <title>The C. elegans RUNX transcription factor RNT-1/MAB-2 is required for asymmetrical cell division of the T blast cell.</title>
        <authorList>
            <person name="Kagoshima H."/>
            <person name="Sawa H."/>
            <person name="Mitani S."/>
            <person name="Burglin T.R."/>
            <person name="Shigesada K."/>
            <person name="Kohara Y."/>
        </authorList>
    </citation>
    <scope>FUNCTION</scope>
    <scope>DISRUPTION PHENOTYPE</scope>
</reference>
<reference evidence="28" key="8">
    <citation type="journal article" date="2005" name="Genes Dev.">
        <title>Asymmetric cortical and nuclear localizations of WRM-1/beta-catenin during asymmetric cell division in C. elegans.</title>
        <authorList>
            <person name="Takeshita H."/>
            <person name="Sawa H."/>
        </authorList>
    </citation>
    <scope>FUNCTION</scope>
    <scope>DISRUPTION PHENOTYPE</scope>
</reference>
<reference evidence="28" key="9">
    <citation type="journal article" date="2006" name="Dev. Biol.">
        <title>A novel noncanonical Wnt pathway is involved in the regulation of the asymmetric B cell division in C. elegans.</title>
        <authorList>
            <person name="Wu M."/>
            <person name="Herman M.A."/>
        </authorList>
    </citation>
    <scope>FUNCTION</scope>
    <scope>DISRUPTION PHENOTYPE</scope>
</reference>
<reference evidence="28" key="10">
    <citation type="journal article" date="2006" name="Dev. Biol.">
        <title>Multiple redundant Wnt signaling components function in two processes during C. elegans vulval development.</title>
        <authorList>
            <person name="Gleason J.E."/>
            <person name="Szyleyko E.A."/>
            <person name="Eisenmann D.M."/>
        </authorList>
    </citation>
    <scope>FUNCTION</scope>
    <scope>DISRUPTION PHENOTYPE</scope>
</reference>
<reference evidence="28" key="11">
    <citation type="journal article" date="2006" name="Dev. Cell">
        <title>Wnt signals and frizzled activity orient anterior-posterior axon outgrowth in C. elegans.</title>
        <authorList>
            <person name="Hilliard M.A."/>
            <person name="Bargmann C.I."/>
        </authorList>
    </citation>
    <scope>FUNCTION</scope>
    <scope>DISRUPTION PHENOTYPE</scope>
</reference>
<reference evidence="28" key="12">
    <citation type="journal article" date="2006" name="Dev. Cell">
        <title>Wnt signals can function as positional cues in establishing cell polarity.</title>
        <authorList>
            <person name="Goldstein B."/>
            <person name="Takeshita H."/>
            <person name="Mizumoto K."/>
            <person name="Sawa H."/>
        </authorList>
    </citation>
    <scope>FUNCTION</scope>
</reference>
<reference evidence="28" key="13">
    <citation type="journal article" date="2006" name="Hum. Mol. Genet.">
        <title>Molecular pathways that influence human tau-induced pathology in Caenorhabditis elegans.</title>
        <authorList>
            <person name="Kraemer B.C."/>
            <person name="Burgess J.K."/>
            <person name="Chen J.H."/>
            <person name="Thomas J.H."/>
            <person name="Schellenberg G.D."/>
        </authorList>
    </citation>
    <scope>DISRUPTION PHENOTYPE</scope>
</reference>
<reference evidence="28" key="14">
    <citation type="journal article" date="2006" name="Science">
        <title>Wnt gradient formation requires retromer function in Wnt-producing cells.</title>
        <authorList>
            <person name="Coudreuse D.Y."/>
            <person name="Roel G."/>
            <person name="Betist M.C."/>
            <person name="Destree O."/>
            <person name="Korswagen H.C."/>
        </authorList>
    </citation>
    <scope>FUNCTION</scope>
    <scope>DISRUPTION PHENOTYPE</scope>
</reference>
<reference evidence="28" key="15">
    <citation type="journal article" date="2007" name="Cell">
        <title>Wnt signaling positions neuromuscular connectivity by inhibiting synapse formation in C. elegans.</title>
        <authorList>
            <person name="Klassen M.P."/>
            <person name="Shen K."/>
        </authorList>
    </citation>
    <scope>FUNCTION</scope>
    <scope>TISSUE SPECIFICITY</scope>
    <scope>DEVELOPMENTAL STAGE</scope>
</reference>
<reference evidence="28" key="16">
    <citation type="journal article" date="2007" name="Dev. Cell">
        <title>Cortical beta-catenin and APC regulate asymmetric nuclear beta-catenin localization during asymmetric cell division in C. elegans.</title>
        <authorList>
            <person name="Mizumoto K."/>
            <person name="Sawa H."/>
        </authorList>
    </citation>
    <scope>FUNCTION</scope>
    <scope>DISRUPTION PHENOTYPE</scope>
</reference>
<reference evidence="28" key="17">
    <citation type="journal article" date="2007" name="Proc. Natl. Acad. Sci. U.S.A.">
        <title>Wnt signal from multiple tissues and lin-3/EGF signal from the gonad maintain vulval precursor cell competence in Caenorhabditis elegans.</title>
        <authorList>
            <person name="Myers T.R."/>
            <person name="Greenwald I."/>
        </authorList>
    </citation>
    <scope>FUNCTION</scope>
    <scope>DISRUPTION PHENOTYPE</scope>
</reference>
<reference evidence="28" key="18">
    <citation type="journal article" date="2008" name="Cell">
        <title>Opposing Wnt pathways orient cell polarity during organogenesis.</title>
        <authorList>
            <person name="Green J.L."/>
            <person name="Inoue T."/>
            <person name="Sternberg P.W."/>
        </authorList>
    </citation>
    <scope>FUNCTION</scope>
    <scope>DISRUPTION PHENOTYPE</scope>
</reference>
<reference evidence="28" key="19">
    <citation type="journal article" date="2009" name="BMC Dev. Biol.">
        <title>The roles of EGF and Wnt signaling during patterning of the C. elegans Bgamma/delta Equivalence Group.</title>
        <authorList>
            <person name="Seah A."/>
            <person name="Sternberg P.W."/>
        </authorList>
    </citation>
    <scope>FUNCTION</scope>
    <scope>DISRUPTION PHENOTYPE</scope>
</reference>
<reference key="20">
    <citation type="journal article" date="2010" name="PLoS Genet.">
        <title>A Wnt-Frz/Ror-Dsh pathway regulates neurite outgrowth in Caenorhabditis elegans.</title>
        <authorList>
            <person name="Song S."/>
            <person name="Zhang B."/>
            <person name="Sun H."/>
            <person name="Li X."/>
            <person name="Xiang Y."/>
            <person name="Liu Z."/>
            <person name="Huang X."/>
            <person name="Ding M."/>
        </authorList>
    </citation>
    <scope>TISSUE SPECIFICITY</scope>
    <scope>DEVELOPMENTAL STAGE</scope>
</reference>
<reference key="21">
    <citation type="journal article" date="2013" name="Dev. Biol.">
        <title>C. elegans fmi-1/flamingo and Wnt pathway components interact genetically to control the anteroposterior neurite growth of the VD GABAergic neurons.</title>
        <authorList>
            <person name="Huarcaya Najarro E."/>
            <person name="Ackley B.D."/>
        </authorList>
    </citation>
    <scope>FUNCTION</scope>
    <scope>MUTAGENESIS OF 100-TRP--PHE-348</scope>
</reference>
<reference key="22">
    <citation type="journal article" date="2021" name="Dev. Biol.">
        <title>GRDN-1/Girdin regulates dendrite morphogenesis and cilium position in two specialized sensory neuron types in C. elegans.</title>
        <authorList>
            <person name="Nechipurenko I."/>
            <person name="Lavrentyeva S."/>
            <person name="Sengupta P."/>
        </authorList>
    </citation>
    <scope>FUNCTION</scope>
    <scope>MUTAGENESIS OF 100-TRP--PHE-348</scope>
</reference>
<protein>
    <recommendedName>
        <fullName>Abnormal cell lineage protein 44</fullName>
    </recommendedName>
    <alternativeName>
        <fullName evidence="30">Wnt protein</fullName>
    </alternativeName>
</protein>
<comment type="function">
    <text evidence="1 7 8 9 10 11 12 14 15 16 17 18 19 20 21 23 24 25 26 27">Ligand for members of the frizzled family of seven transmembrane receptors (By similarity). Affects male tail development, vulval precursor cell specification and egg laying. Involved in morphogenesis by influencing polarity of asymmetric cell divisions of the B, U, and F cells in the male, and the T cell in males and hermaphrodites. Controls spindle orientation in B-gamma cell division during male copulatory spicule development. Involved in specification of the P7.p lineage during vulval development. Has a role in providing polarity and default lin-17 localization in axon development and positioning of neuromuscular synapses in DA9 regions by negatively regulating synaptogenesis. Plays a role in motorneuron development by promoting the extension of the anterior neurite of ventral D-type GABAergic motorneurons along the anterior-posterior axis of the ventral nerve cord (PubMed:23376536). Positively regulates cilium position and dendrite morphogenesis in postembryonic PQR gas-sensing neurons (PubMed:33460640). This is likely through regulating the localization of grdn-1 to the distal dendrites of PQR sensory neurons (PubMed:33460640).</text>
</comment>
<comment type="subcellular location">
    <subcellularLocation>
        <location evidence="2">Secreted</location>
        <location evidence="2">Extracellular space</location>
        <location evidence="2">Extracellular matrix</location>
    </subcellularLocation>
</comment>
<comment type="tissue specificity">
    <text evidence="18 22 25 26">Expressed in the tail hypodermis.</text>
</comment>
<comment type="developmental stage">
    <text evidence="18 22 25 26">Expressed during embryogenesis and larval development (PubMed:17719547, PubMed:7553861, PubMed:8026318). Mainly expressed in the tail during larval stages (PubMed:20711352).</text>
</comment>
<comment type="PTM">
    <text evidence="3 5">Palmitoleoylation is required for efficient binding to frizzled receptors. Depalmitoleoylation leads to Wnt signaling pathway inhibition.</text>
</comment>
<comment type="disruption phenotype">
    <text evidence="8 9 10 11 13 14 15 16 17 19 20 21 26">Cell fate decisions disrupted, protein localization altered and neuron translocation disrupted. Defective tail development in males. Defective in egg laying in hermaphrodites. Nuclear localization of wrm-1 and lit-1 appears disrupted. Similar to tau-induced unc phenotype. Deviations in vulval precursor cell fate are observed when knocked down in conjunction with cwn-1 and egl-20. Bivulval phenotype when accompanied by mom-2 and/or cwn-2 knockdowns. Increase in ectopic synaptic vesicle puncta.</text>
</comment>
<comment type="similarity">
    <text evidence="6">Belongs to the Wnt family.</text>
</comment>
<sequence>MRAAPFDFFFQSTALSTFFILCSLATNEIPTISGAPAGKIVQPPKPNILKQGCPSDLLHSRALRSIQLACRTHPATVISAFEGVQEGLQNCANRLRFQQWDCSEAGNIMHDPPLLRQGFRESSLIWALSSASAAWGVATACAQGWIDDCACNNQMGQNEYEFGGCTHGVQHGITASRKLLTKVGAVNTLLRKVEKHNLKAGRLAIKKTLISSCKCHGVSGSCQQKTCWKRTATLEHITDYLVEKYARAKLYTDDSVVKTTDLIYLEASPDVCKAKSVAGRVCAWRNETHTQGDCDRLCCGNGFSIRHEVVRVKCDCEFVWCCNLVCKDCIQHRWISTCNGTPPKSLIF</sequence>